<gene>
    <name evidence="1" type="primary">ureG</name>
    <name type="ordered locus">Arad_3459</name>
</gene>
<protein>
    <recommendedName>
        <fullName evidence="1">Urease accessory protein UreG</fullName>
    </recommendedName>
</protein>
<reference key="1">
    <citation type="journal article" date="2009" name="J. Bacteriol.">
        <title>Genome sequences of three Agrobacterium biovars help elucidate the evolution of multichromosome genomes in bacteria.</title>
        <authorList>
            <person name="Slater S.C."/>
            <person name="Goldman B.S."/>
            <person name="Goodner B."/>
            <person name="Setubal J.C."/>
            <person name="Farrand S.K."/>
            <person name="Nester E.W."/>
            <person name="Burr T.J."/>
            <person name="Banta L."/>
            <person name="Dickerman A.W."/>
            <person name="Paulsen I."/>
            <person name="Otten L."/>
            <person name="Suen G."/>
            <person name="Welch R."/>
            <person name="Almeida N.F."/>
            <person name="Arnold F."/>
            <person name="Burton O.T."/>
            <person name="Du Z."/>
            <person name="Ewing A."/>
            <person name="Godsy E."/>
            <person name="Heisel S."/>
            <person name="Houmiel K.L."/>
            <person name="Jhaveri J."/>
            <person name="Lu J."/>
            <person name="Miller N.M."/>
            <person name="Norton S."/>
            <person name="Chen Q."/>
            <person name="Phoolcharoen W."/>
            <person name="Ohlin V."/>
            <person name="Ondrusek D."/>
            <person name="Pride N."/>
            <person name="Stricklin S.L."/>
            <person name="Sun J."/>
            <person name="Wheeler C."/>
            <person name="Wilson L."/>
            <person name="Zhu H."/>
            <person name="Wood D.W."/>
        </authorList>
    </citation>
    <scope>NUCLEOTIDE SEQUENCE [LARGE SCALE GENOMIC DNA]</scope>
    <source>
        <strain>K84 / ATCC BAA-868</strain>
    </source>
</reference>
<keyword id="KW-0143">Chaperone</keyword>
<keyword id="KW-0963">Cytoplasm</keyword>
<keyword id="KW-0342">GTP-binding</keyword>
<keyword id="KW-0996">Nickel insertion</keyword>
<keyword id="KW-0547">Nucleotide-binding</keyword>
<dbReference type="EMBL" id="CP000628">
    <property type="protein sequence ID" value="ACM27406.1"/>
    <property type="molecule type" value="Genomic_DNA"/>
</dbReference>
<dbReference type="RefSeq" id="WP_012652104.1">
    <property type="nucleotide sequence ID" value="NC_011985.1"/>
</dbReference>
<dbReference type="SMR" id="B9J8L8"/>
<dbReference type="STRING" id="311403.Arad_3459"/>
<dbReference type="GeneID" id="86849288"/>
<dbReference type="KEGG" id="ara:Arad_3459"/>
<dbReference type="eggNOG" id="COG0378">
    <property type="taxonomic scope" value="Bacteria"/>
</dbReference>
<dbReference type="HOGENOM" id="CLU_072144_1_0_5"/>
<dbReference type="Proteomes" id="UP000001600">
    <property type="component" value="Chromosome 1"/>
</dbReference>
<dbReference type="GO" id="GO:0005737">
    <property type="term" value="C:cytoplasm"/>
    <property type="evidence" value="ECO:0007669"/>
    <property type="project" value="UniProtKB-SubCell"/>
</dbReference>
<dbReference type="GO" id="GO:0005525">
    <property type="term" value="F:GTP binding"/>
    <property type="evidence" value="ECO:0007669"/>
    <property type="project" value="UniProtKB-KW"/>
</dbReference>
<dbReference type="GO" id="GO:0003924">
    <property type="term" value="F:GTPase activity"/>
    <property type="evidence" value="ECO:0007669"/>
    <property type="project" value="InterPro"/>
</dbReference>
<dbReference type="GO" id="GO:0016151">
    <property type="term" value="F:nickel cation binding"/>
    <property type="evidence" value="ECO:0007669"/>
    <property type="project" value="UniProtKB-UniRule"/>
</dbReference>
<dbReference type="GO" id="GO:0043419">
    <property type="term" value="P:urea catabolic process"/>
    <property type="evidence" value="ECO:0007669"/>
    <property type="project" value="InterPro"/>
</dbReference>
<dbReference type="CDD" id="cd05540">
    <property type="entry name" value="UreG"/>
    <property type="match status" value="1"/>
</dbReference>
<dbReference type="FunFam" id="3.40.50.300:FF:000208">
    <property type="entry name" value="Urease accessory protein UreG"/>
    <property type="match status" value="1"/>
</dbReference>
<dbReference type="Gene3D" id="3.40.50.300">
    <property type="entry name" value="P-loop containing nucleotide triphosphate hydrolases"/>
    <property type="match status" value="1"/>
</dbReference>
<dbReference type="HAMAP" id="MF_01389">
    <property type="entry name" value="UreG"/>
    <property type="match status" value="1"/>
</dbReference>
<dbReference type="InterPro" id="IPR003495">
    <property type="entry name" value="CobW/HypB/UreG_nucleotide-bd"/>
</dbReference>
<dbReference type="InterPro" id="IPR027417">
    <property type="entry name" value="P-loop_NTPase"/>
</dbReference>
<dbReference type="InterPro" id="IPR004400">
    <property type="entry name" value="UreG"/>
</dbReference>
<dbReference type="NCBIfam" id="TIGR00101">
    <property type="entry name" value="ureG"/>
    <property type="match status" value="1"/>
</dbReference>
<dbReference type="PANTHER" id="PTHR31715">
    <property type="entry name" value="UREASE ACCESSORY PROTEIN G"/>
    <property type="match status" value="1"/>
</dbReference>
<dbReference type="PANTHER" id="PTHR31715:SF0">
    <property type="entry name" value="UREASE ACCESSORY PROTEIN G"/>
    <property type="match status" value="1"/>
</dbReference>
<dbReference type="Pfam" id="PF02492">
    <property type="entry name" value="cobW"/>
    <property type="match status" value="1"/>
</dbReference>
<dbReference type="PIRSF" id="PIRSF005624">
    <property type="entry name" value="Ni-bind_GTPase"/>
    <property type="match status" value="1"/>
</dbReference>
<dbReference type="SUPFAM" id="SSF52540">
    <property type="entry name" value="P-loop containing nucleoside triphosphate hydrolases"/>
    <property type="match status" value="1"/>
</dbReference>
<accession>B9J8L8</accession>
<feature type="chain" id="PRO_1000184261" description="Urease accessory protein UreG">
    <location>
        <begin position="1"/>
        <end position="203"/>
    </location>
</feature>
<feature type="binding site" evidence="1">
    <location>
        <begin position="14"/>
        <end position="21"/>
    </location>
    <ligand>
        <name>GTP</name>
        <dbReference type="ChEBI" id="CHEBI:37565"/>
    </ligand>
</feature>
<name>UREG_RHIR8</name>
<sequence length="203" mass="21770">MKSRNGPLRVGIGGPVGSGKTALTEKLCKAMRDDYSVAVVTNDIYTTEDAEALVRMQALTSDRIVGVETGGCPHTAIREDATINLQAIAGLNERLPDLDVVFIESGGDNLAATFSPDLADITIYVISVCQGEEIPRKGGPGITKSDLLVINKKDLAPFVDVDLDVMDRDATRMRQARPFVFSDMKRGDGVGTIVDFLKEQGGL</sequence>
<organism>
    <name type="scientific">Rhizobium rhizogenes (strain K84 / ATCC BAA-868)</name>
    <name type="common">Agrobacterium radiobacter</name>
    <dbReference type="NCBI Taxonomy" id="311403"/>
    <lineage>
        <taxon>Bacteria</taxon>
        <taxon>Pseudomonadati</taxon>
        <taxon>Pseudomonadota</taxon>
        <taxon>Alphaproteobacteria</taxon>
        <taxon>Hyphomicrobiales</taxon>
        <taxon>Rhizobiaceae</taxon>
        <taxon>Rhizobium/Agrobacterium group</taxon>
        <taxon>Rhizobium</taxon>
    </lineage>
</organism>
<comment type="function">
    <text evidence="1">Facilitates the functional incorporation of the urease nickel metallocenter. This process requires GTP hydrolysis, probably effectuated by UreG.</text>
</comment>
<comment type="subunit">
    <text evidence="1">Homodimer. UreD, UreF and UreG form a complex that acts as a GTP-hydrolysis-dependent molecular chaperone, activating the urease apoprotein by helping to assemble the nickel containing metallocenter of UreC. The UreE protein probably delivers the nickel.</text>
</comment>
<comment type="subcellular location">
    <subcellularLocation>
        <location evidence="1">Cytoplasm</location>
    </subcellularLocation>
</comment>
<comment type="similarity">
    <text evidence="1">Belongs to the SIMIBI class G3E GTPase family. UreG subfamily.</text>
</comment>
<evidence type="ECO:0000255" key="1">
    <source>
        <dbReference type="HAMAP-Rule" id="MF_01389"/>
    </source>
</evidence>
<proteinExistence type="inferred from homology"/>